<organism>
    <name type="scientific">Mycoplasma pneumoniae (strain ATCC 29342 / M129 / Subtype 1)</name>
    <name type="common">Mycoplasmoides pneumoniae</name>
    <dbReference type="NCBI Taxonomy" id="272634"/>
    <lineage>
        <taxon>Bacteria</taxon>
        <taxon>Bacillati</taxon>
        <taxon>Mycoplasmatota</taxon>
        <taxon>Mycoplasmoidales</taxon>
        <taxon>Mycoplasmoidaceae</taxon>
        <taxon>Mycoplasmoides</taxon>
    </lineage>
</organism>
<protein>
    <recommendedName>
        <fullName>Uncharacterized protein MG236 homolog</fullName>
    </recommendedName>
</protein>
<reference key="1">
    <citation type="journal article" date="1996" name="Nucleic Acids Res.">
        <title>Complete sequence analysis of the genome of the bacterium Mycoplasma pneumoniae.</title>
        <authorList>
            <person name="Himmelreich R."/>
            <person name="Hilbert H."/>
            <person name="Plagens H."/>
            <person name="Pirkl E."/>
            <person name="Li B.-C."/>
            <person name="Herrmann R."/>
        </authorList>
    </citation>
    <scope>NUCLEOTIDE SEQUENCE [LARGE SCALE GENOMIC DNA]</scope>
    <source>
        <strain>ATCC 29342 / M129 / Subtype 1</strain>
    </source>
</reference>
<sequence>MVLKSKGSVLDLEHDNQTLKDYISVFERNKMRLTQSRLMLLQCLVQHRDWHTLAELKHHLEQNQQRTTLASIYNNLKIFAKLKLINIFVDTNRFETYYCLRHENHKHIYFFDENQRKFLTLPLQDKEALSLIGHKSKHGKIKLNDFYIVASGTLEDDQ</sequence>
<accession>P75456</accession>
<dbReference type="EMBL" id="U00089">
    <property type="protein sequence ID" value="AAB96155.1"/>
    <property type="molecule type" value="Genomic_DNA"/>
</dbReference>
<dbReference type="PIR" id="S73833">
    <property type="entry name" value="S73833"/>
</dbReference>
<dbReference type="RefSeq" id="NP_110017.1">
    <property type="nucleotide sequence ID" value="NC_000912.1"/>
</dbReference>
<dbReference type="RefSeq" id="WP_010874685.1">
    <property type="nucleotide sequence ID" value="NZ_OU342337.1"/>
</dbReference>
<dbReference type="SMR" id="P75456"/>
<dbReference type="IntAct" id="P75456">
    <property type="interactions" value="1"/>
</dbReference>
<dbReference type="STRING" id="272634.MPN_329"/>
<dbReference type="EnsemblBacteria" id="AAB96155">
    <property type="protein sequence ID" value="AAB96155"/>
    <property type="gene ID" value="MPN_329"/>
</dbReference>
<dbReference type="KEGG" id="mpn:MPN_329"/>
<dbReference type="PATRIC" id="fig|272634.6.peg.353"/>
<dbReference type="HOGENOM" id="CLU_1738502_0_0_14"/>
<dbReference type="OrthoDB" id="9930967at2"/>
<dbReference type="BioCyc" id="MPNE272634:G1GJ3-521-MONOMER"/>
<dbReference type="Proteomes" id="UP000000808">
    <property type="component" value="Chromosome"/>
</dbReference>
<dbReference type="GO" id="GO:0003700">
    <property type="term" value="F:DNA-binding transcription factor activity"/>
    <property type="evidence" value="ECO:0007669"/>
    <property type="project" value="InterPro"/>
</dbReference>
<dbReference type="GO" id="GO:0000976">
    <property type="term" value="F:transcription cis-regulatory region binding"/>
    <property type="evidence" value="ECO:0007669"/>
    <property type="project" value="TreeGrafter"/>
</dbReference>
<dbReference type="GO" id="GO:0008270">
    <property type="term" value="F:zinc ion binding"/>
    <property type="evidence" value="ECO:0007669"/>
    <property type="project" value="TreeGrafter"/>
</dbReference>
<dbReference type="GO" id="GO:0045892">
    <property type="term" value="P:negative regulation of DNA-templated transcription"/>
    <property type="evidence" value="ECO:0007669"/>
    <property type="project" value="TreeGrafter"/>
</dbReference>
<dbReference type="GO" id="GO:1900376">
    <property type="term" value="P:regulation of secondary metabolite biosynthetic process"/>
    <property type="evidence" value="ECO:0007669"/>
    <property type="project" value="TreeGrafter"/>
</dbReference>
<dbReference type="Gene3D" id="1.10.10.10">
    <property type="entry name" value="Winged helix-like DNA-binding domain superfamily/Winged helix DNA-binding domain"/>
    <property type="match status" value="1"/>
</dbReference>
<dbReference type="InterPro" id="IPR002481">
    <property type="entry name" value="FUR"/>
</dbReference>
<dbReference type="InterPro" id="IPR036388">
    <property type="entry name" value="WH-like_DNA-bd_sf"/>
</dbReference>
<dbReference type="InterPro" id="IPR036390">
    <property type="entry name" value="WH_DNA-bd_sf"/>
</dbReference>
<dbReference type="PANTHER" id="PTHR33202:SF8">
    <property type="entry name" value="PEROXIDE-RESPONSIVE REPRESSOR PERR"/>
    <property type="match status" value="1"/>
</dbReference>
<dbReference type="PANTHER" id="PTHR33202">
    <property type="entry name" value="ZINC UPTAKE REGULATION PROTEIN"/>
    <property type="match status" value="1"/>
</dbReference>
<dbReference type="Pfam" id="PF01475">
    <property type="entry name" value="FUR"/>
    <property type="match status" value="1"/>
</dbReference>
<dbReference type="SUPFAM" id="SSF46785">
    <property type="entry name" value="Winged helix' DNA-binding domain"/>
    <property type="match status" value="1"/>
</dbReference>
<keyword id="KW-1185">Reference proteome</keyword>
<proteinExistence type="predicted"/>
<gene>
    <name type="ordered locus">MPN_329</name>
    <name type="ORF">F10_orf158</name>
    <name type="ORF">MP507</name>
</gene>
<feature type="chain" id="PRO_0000210474" description="Uncharacterized protein MG236 homolog">
    <location>
        <begin position="1"/>
        <end position="158"/>
    </location>
</feature>
<name>Y329_MYCPN</name>